<protein>
    <recommendedName>
        <fullName evidence="14">Tribbles</fullName>
    </recommendedName>
</protein>
<feature type="chain" id="PRO_0000442851" description="Tribbles">
    <location>
        <begin position="1"/>
        <end position="484"/>
    </location>
</feature>
<feature type="domain" description="Protein kinase" evidence="1">
    <location>
        <begin position="129"/>
        <end position="397"/>
    </location>
</feature>
<feature type="region of interest" description="Disordered" evidence="2">
    <location>
        <begin position="1"/>
        <end position="51"/>
    </location>
</feature>
<feature type="region of interest" description="Disordered" evidence="2">
    <location>
        <begin position="420"/>
        <end position="443"/>
    </location>
</feature>
<feature type="region of interest" description="Disordered" evidence="2">
    <location>
        <begin position="464"/>
        <end position="484"/>
    </location>
</feature>
<feature type="compositionally biased region" description="Polar residues" evidence="2">
    <location>
        <begin position="1"/>
        <end position="23"/>
    </location>
</feature>
<feature type="compositionally biased region" description="Low complexity" evidence="2">
    <location>
        <begin position="24"/>
        <end position="49"/>
    </location>
</feature>
<feature type="compositionally biased region" description="Acidic residues" evidence="2">
    <location>
        <begin position="420"/>
        <end position="437"/>
    </location>
</feature>
<feature type="compositionally biased region" description="Acidic residues" evidence="2">
    <location>
        <begin position="475"/>
        <end position="484"/>
    </location>
</feature>
<feature type="mutagenesis site" description="Increased interaction with Akt1 and some negative regulation of Atk1. Increased interaction with slbo but no effect on negative regulation of slbo-dependent border cell migration. No effect on interaction and negative regulation of stg-dependent cell divisions in the wing." evidence="13">
    <original>R</original>
    <variation>E</variation>
    <location>
        <position position="141"/>
    </location>
</feature>
<feature type="mutagenesis site" description="Reduced interaction and inhibition of Akt1 resulting in increased Akt1-mediated growth and loss of carbohydrate clearance from the hemolymph. No effect on interaction with slbo and stg, and no effect on the negative regulation of slbo-dependent border cell migration and stg-dependent cell divisions in the wing." evidence="13">
    <original>R</original>
    <variation>Q</variation>
    <location>
        <position position="141"/>
    </location>
</feature>
<feature type="mutagenesis site" description="Partial loss of border cell migration when expressed in border cells." evidence="10">
    <original>R</original>
    <variation>A</variation>
    <location>
        <position position="154"/>
    </location>
</feature>
<feature type="mutagenesis site" description="Reduced interaction with Akt1 and reduced inhibition of Akt1-mediated growth. Reduced interaction with slbo and fails to block border cell migration. No effect on cell division in the posterior compartment of the wing." evidence="10 11 13">
    <original>D</original>
    <variation>K</variation>
    <location>
        <position position="264"/>
    </location>
</feature>
<feature type="mutagenesis site" description="No effect on mitosis. Embryos display an early pause in the cell cycle similar to wild-type." evidence="5">
    <original>K</original>
    <variation>R</variation>
    <location>
        <position position="266"/>
    </location>
</feature>
<feature type="mutagenesis site" description="Partial loss of border cell migration when expressed in border cells." evidence="10">
    <original>E</original>
    <variation>G</variation>
    <location>
        <position position="286"/>
    </location>
</feature>
<keyword id="KW-0131">Cell cycle</keyword>
<keyword id="KW-0963">Cytoplasm</keyword>
<keyword id="KW-0539">Nucleus</keyword>
<keyword id="KW-1185">Reference proteome</keyword>
<sequence length="484" mass="54077">MDNSSGQNSRTASSASTSKIVNYSSPVSPGVAAATSSSSSSSSSGMSSSQEDTVLGLFTPKKEFPNAKMLQTIREKLMTPGGACDLLALGIAAEPTDQQPVKLIQQRYLISAQPSHISAAVAAKTPASYRHLVDLTASNLRCVDIFTGEQFLCRIVNEPLHKVQRAYFQLQQHDEELRRSTIYGHPLIRPVHDIIPLTKDRTYILIAPVPQERDSTGGVTGVYENLHTYIRHAKRLCETEARAIFHQICQTVQVCHRNGIILRDLKLKRFYFIDEARTKLQYESLEGSMILDGEDDTLSDKIGCPLYTAPELLCPQQTYKGKPADMWSLGVILYTMLVGQYPFYEKANCNLITVIRHGNVQIPLTLSKSVRWLLLSLLRKDYTERMTASHIFLTPWLREQRPFHMYLPVDVEVAEDWSDAEEDEGTAADAMDDDEEGLCPLGDKHEYEDIGVEPLDYTRSTLQMAQNANGLSTEPEPDTDVDMG</sequence>
<organism evidence="19">
    <name type="scientific">Drosophila melanogaster</name>
    <name type="common">Fruit fly</name>
    <dbReference type="NCBI Taxonomy" id="7227"/>
    <lineage>
        <taxon>Eukaryota</taxon>
        <taxon>Metazoa</taxon>
        <taxon>Ecdysozoa</taxon>
        <taxon>Arthropoda</taxon>
        <taxon>Hexapoda</taxon>
        <taxon>Insecta</taxon>
        <taxon>Pterygota</taxon>
        <taxon>Neoptera</taxon>
        <taxon>Endopterygota</taxon>
        <taxon>Diptera</taxon>
        <taxon>Brachycera</taxon>
        <taxon>Muscomorpha</taxon>
        <taxon>Ephydroidea</taxon>
        <taxon>Drosophilidae</taxon>
        <taxon>Drosophila</taxon>
        <taxon>Sophophora</taxon>
    </lineage>
</organism>
<reference evidence="16" key="1">
    <citation type="journal article" date="2000" name="Curr. Biol.">
        <title>Tribbles, a cell cycle brake that coordinates proliferation and morphogenesis during Drosophila gastrulation.</title>
        <authorList>
            <person name="Seher T.C."/>
            <person name="Leptin M."/>
        </authorList>
    </citation>
    <scope>NUCLEOTIDE SEQUENCE [MRNA]</scope>
    <scope>FUNCTION</scope>
    <scope>DEVELOPMENTAL STAGE</scope>
    <scope>DISRUPTION PHENOTYPE</scope>
</reference>
<reference evidence="19" key="2">
    <citation type="journal article" date="2000" name="Science">
        <title>The genome sequence of Drosophila melanogaster.</title>
        <authorList>
            <person name="Adams M.D."/>
            <person name="Celniker S.E."/>
            <person name="Holt R.A."/>
            <person name="Evans C.A."/>
            <person name="Gocayne J.D."/>
            <person name="Amanatides P.G."/>
            <person name="Scherer S.E."/>
            <person name="Li P.W."/>
            <person name="Hoskins R.A."/>
            <person name="Galle R.F."/>
            <person name="George R.A."/>
            <person name="Lewis S.E."/>
            <person name="Richards S."/>
            <person name="Ashburner M."/>
            <person name="Henderson S.N."/>
            <person name="Sutton G.G."/>
            <person name="Wortman J.R."/>
            <person name="Yandell M.D."/>
            <person name="Zhang Q."/>
            <person name="Chen L.X."/>
            <person name="Brandon R.C."/>
            <person name="Rogers Y.-H.C."/>
            <person name="Blazej R.G."/>
            <person name="Champe M."/>
            <person name="Pfeiffer B.D."/>
            <person name="Wan K.H."/>
            <person name="Doyle C."/>
            <person name="Baxter E.G."/>
            <person name="Helt G."/>
            <person name="Nelson C.R."/>
            <person name="Miklos G.L.G."/>
            <person name="Abril J.F."/>
            <person name="Agbayani A."/>
            <person name="An H.-J."/>
            <person name="Andrews-Pfannkoch C."/>
            <person name="Baldwin D."/>
            <person name="Ballew R.M."/>
            <person name="Basu A."/>
            <person name="Baxendale J."/>
            <person name="Bayraktaroglu L."/>
            <person name="Beasley E.M."/>
            <person name="Beeson K.Y."/>
            <person name="Benos P.V."/>
            <person name="Berman B.P."/>
            <person name="Bhandari D."/>
            <person name="Bolshakov S."/>
            <person name="Borkova D."/>
            <person name="Botchan M.R."/>
            <person name="Bouck J."/>
            <person name="Brokstein P."/>
            <person name="Brottier P."/>
            <person name="Burtis K.C."/>
            <person name="Busam D.A."/>
            <person name="Butler H."/>
            <person name="Cadieu E."/>
            <person name="Center A."/>
            <person name="Chandra I."/>
            <person name="Cherry J.M."/>
            <person name="Cawley S."/>
            <person name="Dahlke C."/>
            <person name="Davenport L.B."/>
            <person name="Davies P."/>
            <person name="de Pablos B."/>
            <person name="Delcher A."/>
            <person name="Deng Z."/>
            <person name="Mays A.D."/>
            <person name="Dew I."/>
            <person name="Dietz S.M."/>
            <person name="Dodson K."/>
            <person name="Doup L.E."/>
            <person name="Downes M."/>
            <person name="Dugan-Rocha S."/>
            <person name="Dunkov B.C."/>
            <person name="Dunn P."/>
            <person name="Durbin K.J."/>
            <person name="Evangelista C.C."/>
            <person name="Ferraz C."/>
            <person name="Ferriera S."/>
            <person name="Fleischmann W."/>
            <person name="Fosler C."/>
            <person name="Gabrielian A.E."/>
            <person name="Garg N.S."/>
            <person name="Gelbart W.M."/>
            <person name="Glasser K."/>
            <person name="Glodek A."/>
            <person name="Gong F."/>
            <person name="Gorrell J.H."/>
            <person name="Gu Z."/>
            <person name="Guan P."/>
            <person name="Harris M."/>
            <person name="Harris N.L."/>
            <person name="Harvey D.A."/>
            <person name="Heiman T.J."/>
            <person name="Hernandez J.R."/>
            <person name="Houck J."/>
            <person name="Hostin D."/>
            <person name="Houston K.A."/>
            <person name="Howland T.J."/>
            <person name="Wei M.-H."/>
            <person name="Ibegwam C."/>
            <person name="Jalali M."/>
            <person name="Kalush F."/>
            <person name="Karpen G.H."/>
            <person name="Ke Z."/>
            <person name="Kennison J.A."/>
            <person name="Ketchum K.A."/>
            <person name="Kimmel B.E."/>
            <person name="Kodira C.D."/>
            <person name="Kraft C.L."/>
            <person name="Kravitz S."/>
            <person name="Kulp D."/>
            <person name="Lai Z."/>
            <person name="Lasko P."/>
            <person name="Lei Y."/>
            <person name="Levitsky A.A."/>
            <person name="Li J.H."/>
            <person name="Li Z."/>
            <person name="Liang Y."/>
            <person name="Lin X."/>
            <person name="Liu X."/>
            <person name="Mattei B."/>
            <person name="McIntosh T.C."/>
            <person name="McLeod M.P."/>
            <person name="McPherson D."/>
            <person name="Merkulov G."/>
            <person name="Milshina N.V."/>
            <person name="Mobarry C."/>
            <person name="Morris J."/>
            <person name="Moshrefi A."/>
            <person name="Mount S.M."/>
            <person name="Moy M."/>
            <person name="Murphy B."/>
            <person name="Murphy L."/>
            <person name="Muzny D.M."/>
            <person name="Nelson D.L."/>
            <person name="Nelson D.R."/>
            <person name="Nelson K.A."/>
            <person name="Nixon K."/>
            <person name="Nusskern D.R."/>
            <person name="Pacleb J.M."/>
            <person name="Palazzolo M."/>
            <person name="Pittman G.S."/>
            <person name="Pan S."/>
            <person name="Pollard J."/>
            <person name="Puri V."/>
            <person name="Reese M.G."/>
            <person name="Reinert K."/>
            <person name="Remington K."/>
            <person name="Saunders R.D.C."/>
            <person name="Scheeler F."/>
            <person name="Shen H."/>
            <person name="Shue B.C."/>
            <person name="Siden-Kiamos I."/>
            <person name="Simpson M."/>
            <person name="Skupski M.P."/>
            <person name="Smith T.J."/>
            <person name="Spier E."/>
            <person name="Spradling A.C."/>
            <person name="Stapleton M."/>
            <person name="Strong R."/>
            <person name="Sun E."/>
            <person name="Svirskas R."/>
            <person name="Tector C."/>
            <person name="Turner R."/>
            <person name="Venter E."/>
            <person name="Wang A.H."/>
            <person name="Wang X."/>
            <person name="Wang Z.-Y."/>
            <person name="Wassarman D.A."/>
            <person name="Weinstock G.M."/>
            <person name="Weissenbach J."/>
            <person name="Williams S.M."/>
            <person name="Woodage T."/>
            <person name="Worley K.C."/>
            <person name="Wu D."/>
            <person name="Yang S."/>
            <person name="Yao Q.A."/>
            <person name="Ye J."/>
            <person name="Yeh R.-F."/>
            <person name="Zaveri J.S."/>
            <person name="Zhan M."/>
            <person name="Zhang G."/>
            <person name="Zhao Q."/>
            <person name="Zheng L."/>
            <person name="Zheng X.H."/>
            <person name="Zhong F.N."/>
            <person name="Zhong W."/>
            <person name="Zhou X."/>
            <person name="Zhu S.C."/>
            <person name="Zhu X."/>
            <person name="Smith H.O."/>
            <person name="Gibbs R.A."/>
            <person name="Myers E.W."/>
            <person name="Rubin G.M."/>
            <person name="Venter J.C."/>
        </authorList>
    </citation>
    <scope>NUCLEOTIDE SEQUENCE [LARGE SCALE GENOMIC DNA]</scope>
    <source>
        <strain evidence="19">Berkeley</strain>
    </source>
</reference>
<reference evidence="19" key="3">
    <citation type="journal article" date="2002" name="Genome Biol.">
        <title>Annotation of the Drosophila melanogaster euchromatic genome: a systematic review.</title>
        <authorList>
            <person name="Misra S."/>
            <person name="Crosby M.A."/>
            <person name="Mungall C.J."/>
            <person name="Matthews B.B."/>
            <person name="Campbell K.S."/>
            <person name="Hradecky P."/>
            <person name="Huang Y."/>
            <person name="Kaminker J.S."/>
            <person name="Millburn G.H."/>
            <person name="Prochnik S.E."/>
            <person name="Smith C.D."/>
            <person name="Tupy J.L."/>
            <person name="Whitfield E.J."/>
            <person name="Bayraktaroglu L."/>
            <person name="Berman B.P."/>
            <person name="Bettencourt B.R."/>
            <person name="Celniker S.E."/>
            <person name="de Grey A.D.N.J."/>
            <person name="Drysdale R.A."/>
            <person name="Harris N.L."/>
            <person name="Richter J."/>
            <person name="Russo S."/>
            <person name="Schroeder A.J."/>
            <person name="Shu S.Q."/>
            <person name="Stapleton M."/>
            <person name="Yamada C."/>
            <person name="Ashburner M."/>
            <person name="Gelbart W.M."/>
            <person name="Rubin G.M."/>
            <person name="Lewis S.E."/>
        </authorList>
    </citation>
    <scope>GENOME REANNOTATION</scope>
    <source>
        <strain evidence="19">Berkeley</strain>
    </source>
</reference>
<reference evidence="17" key="4">
    <citation type="submission" date="2003-02" db="EMBL/GenBank/DDBJ databases">
        <authorList>
            <person name="Stapleton M."/>
            <person name="Brokstein P."/>
            <person name="Hong L."/>
            <person name="Agbayani A."/>
            <person name="Carlson J."/>
            <person name="Champe M."/>
            <person name="Chavez C."/>
            <person name="Dorsett V."/>
            <person name="Dresnek D."/>
            <person name="Farfan D."/>
            <person name="Frise E."/>
            <person name="George R."/>
            <person name="Gonzalez M."/>
            <person name="Guarin H."/>
            <person name="Kronmiller B."/>
            <person name="Li P."/>
            <person name="Liao G."/>
            <person name="Miranda A."/>
            <person name="Mungall C.J."/>
            <person name="Nunoo J."/>
            <person name="Pacleb J."/>
            <person name="Paragas V."/>
            <person name="Park S."/>
            <person name="Patel S."/>
            <person name="Phouanenavong S."/>
            <person name="Wan K."/>
            <person name="Yu C."/>
            <person name="Lewis S.E."/>
            <person name="Rubin G.M."/>
            <person name="Celniker S."/>
        </authorList>
    </citation>
    <scope>NUCLEOTIDE SEQUENCE [LARGE SCALE MRNA]</scope>
    <source>
        <strain evidence="17">Berkeley</strain>
        <tissue>Head</tissue>
    </source>
</reference>
<reference evidence="15" key="5">
    <citation type="journal article" date="2000" name="Cell">
        <title>Tribbles coordinates mitosis and morphogenesis in Drosophila by regulating string/CDC25 proteolysis.</title>
        <authorList>
            <person name="Mata J."/>
            <person name="Curado S."/>
            <person name="Ephrussi A."/>
            <person name="Roerth P."/>
        </authorList>
    </citation>
    <scope>FUNCTION</scope>
    <scope>DEVELOPMENTAL STAGE</scope>
    <scope>DISRUPTION PHENOTYPE</scope>
</reference>
<reference evidence="15" key="6">
    <citation type="journal article" date="2000" name="Cell">
        <title>A genetic link between morphogenesis and cell division during formation of the ventral furrow in Drosophila.</title>
        <authorList>
            <person name="Grosshans J."/>
            <person name="Wieschaus E."/>
        </authorList>
    </citation>
    <scope>FUNCTION</scope>
    <scope>DEVELOPMENTAL STAGE</scope>
    <scope>MUTAGENESIS OF LYS-266</scope>
</reference>
<reference evidence="15" key="7">
    <citation type="journal article" date="2000" name="Mol. Cell">
        <title>The level of C/EBP protein is critical for cell migration during Drosophila oogenesis and is tightly controlled by regulated degradation.</title>
        <authorList>
            <person name="Roerth P."/>
            <person name="Szabo K."/>
            <person name="Texido G."/>
        </authorList>
    </citation>
    <scope>FUNCTION</scope>
    <scope>INTERACTION WITH SLBO</scope>
    <scope>DISRUPTION PHENOTYPE</scope>
</reference>
<reference evidence="15" key="8">
    <citation type="journal article" date="2004" name="Dev. Biol.">
        <title>Mother-daughter precursor cell fate transformation after Cdc2 down-regulation in the Drosophila bristle lineage.</title>
        <authorList>
            <person name="Fichelson P."/>
            <person name="Gho M."/>
        </authorList>
    </citation>
    <scope>FUNCTION</scope>
</reference>
<reference evidence="15" key="9">
    <citation type="journal article" date="2008" name="Genetics">
        <title>Genetic dissociation of ethanol sensitivity and memory formation in Drosophila melanogaster.</title>
        <authorList>
            <person name="LaFerriere H."/>
            <person name="Guarnieri D.J."/>
            <person name="Sitaraman D."/>
            <person name="Diegelmann S."/>
            <person name="Heberlein U."/>
            <person name="Zars T."/>
        </authorList>
    </citation>
    <scope>FUNCTION</scope>
</reference>
<reference evidence="15" key="10">
    <citation type="journal article" date="2013" name="Curr. Biol.">
        <title>Mechanism and regulation of Cdc25/Twine protein destruction in embryonic cell-cycle remodeling.</title>
        <authorList>
            <person name="Farrell J.A."/>
            <person name="O'Farrell P.H."/>
        </authorList>
    </citation>
    <scope>FUNCTION</scope>
</reference>
<reference evidence="15" key="11">
    <citation type="journal article" date="2013" name="Dev. Biol.">
        <title>The kinase domain of Drosophila Tribbles is required for turnover of fly C/EBP during cell migration.</title>
        <authorList>
            <person name="Masoner V."/>
            <person name="Das R."/>
            <person name="Pence L."/>
            <person name="Anand G."/>
            <person name="LaFerriere H."/>
            <person name="Zars T."/>
            <person name="Bouyain S."/>
            <person name="Dobens L.L."/>
        </authorList>
    </citation>
    <scope>FUNCTION</scope>
    <scope>SUBCELLULAR LOCATION</scope>
    <scope>DISRUPTION PHENOTYPE</scope>
    <scope>MUTAGENESIS OF ARG-154; ASP-264 AND GLU-286</scope>
</reference>
<reference key="12">
    <citation type="journal article" date="2014" name="PLoS ONE">
        <title>Drosophila tribbles antagonizes insulin signaling-mediated growth and metabolism via interactions with Akt kinase.</title>
        <authorList>
            <person name="Das R."/>
            <person name="Sebo Z."/>
            <person name="Pence L."/>
            <person name="Dobens L.L."/>
        </authorList>
    </citation>
    <scope>FUNCTION</scope>
    <scope>INTERACTION WITH AKT1</scope>
    <scope>SUBCELLULAR LOCATION</scope>
    <scope>DISRUPTION PHENOTYPE</scope>
    <scope>MUTAGENESIS OF ASP-264</scope>
</reference>
<reference key="13">
    <citation type="journal article" date="2014" name="PLoS ONE">
        <authorList>
            <person name="Das R."/>
            <person name="Sebo Z."/>
            <person name="Pence L."/>
            <person name="Dobens L.L."/>
        </authorList>
    </citation>
    <scope>ERRATUM OF PUBMED:25329475</scope>
</reference>
<reference key="14">
    <citation type="journal article" date="2017" name="Dis. Model. Mech.">
        <title>A Drosophila model of insulin resistance associated with the human Trib3 Q/R polymorphism.</title>
        <authorList>
            <person name="Fischer Z."/>
            <person name="Das R."/>
            <person name="Shipman A."/>
            <person name="Fan J.Y."/>
            <person name="Pence L."/>
            <person name="Bouyain S."/>
            <person name="Dobens L.L."/>
        </authorList>
    </citation>
    <scope>FUNCTION</scope>
    <scope>INTERACTION WITH AKT1</scope>
    <scope>SUBCELLULAR LOCATION</scope>
    <scope>DISRUPTION PHENOTYPE</scope>
    <scope>MUTAGENESIS OF ARG-141 AND ASP-264</scope>
</reference>
<reference key="15">
    <citation type="journal article" date="2017" name="Neurobiol. Learn. Mem.">
        <title>The Drosophila melanogaster tribbles pseudokinase is necessary for proper memory formation.</title>
        <authorList>
            <person name="LaFerriere H."/>
            <person name="Zars T."/>
        </authorList>
    </citation>
    <scope>FUNCTION</scope>
    <scope>TISSUE SPECIFICITY</scope>
</reference>
<proteinExistence type="evidence at protein level"/>
<comment type="function">
    <text evidence="3 4 5 6 7 8 9 10 11 12 13">Adapter protein that negatively regulates different signaling pathways to coordinate cell differentiation, proliferation, migration and growth (PubMed:10837248, PubMed:10850493, PubMed:10850494, PubMed:10949024, PubMed:23305818, PubMed:25329475). Functions by binding to key regulatory proteins and either blocks their activity or regulates their turnover by the proteasome (PubMed:10837248, PubMed:10850493, PubMed:10850494, PubMed:10949024, PubMed:23305818, PubMed:25329475). In various developing tissues functions as a cell cycle regulator that mediates cell proliferation according to the requirements of the developmental program (PubMed:10837248, PubMed:10850493, PubMed:10850494, PubMed:15581871). Acts by inducing the proteasomal degradation of the CD25 mitotic activators stg and twe at critical stages of development to delay entry into mitosis and thus mediate cell proliferation (PubMed:10837248, PubMed:10850493, PubMed:10850494, PubMed:15581871, PubMed:23290551, PubMed:29025897). During gastrulation, negatively regulates stg to delay mitosis in the ventral region of the embryonic mesoderm thus allowing invagination to be completed before cell division takes place (PubMed:10837248, PubMed:10850493, PubMed:10850494). Delaying stg-dependent mitosis during bristle development and in migrating germline pole cells also arrests their cell divisions, whereas in cystocytes it promotes their cell divisions (PubMed:10837248, PubMed:10850493, PubMed:15581871). Involved in the regulation of the mid-blastula transition; promotes the destruction of twe resulting in the cell cycle arrest in G2 of cycle 14 which delays mitosis and thus reduces cell proliferation allowing cell fate specification and morphogenesis to take place (PubMed:23290551). In germline cells, blocks border cell migration during oogenesis by binding to slbo/C/EBP and promoting its ubiquitination and degradation by the proteasome (PubMed:10949024, PubMed:23305818, PubMed:29025897). May function in a negative feedback loop with slbo to coordinate proper border cell migration (PubMed:23305818). During tissue growth negatively regulates insulin signaling by binding to Akt1 and blocking its phosphorylation-dependent activation (PubMed:25329475, PubMed:29025897). However it may also function downstream in the insulin signaling pathway, acting with Akt1 to direct foxo degradation (PubMed:25329475). Essential for the proper formation of operant place and aversive olfactory memories (PubMed:18430923, PubMed:28669782).</text>
</comment>
<comment type="subunit">
    <text evidence="6 11 13">Interacts with slbo (PubMed:10949024). Interacts with Akt1 (PubMed:25329475, PubMed:29025897).</text>
</comment>
<comment type="interaction">
    <interactant intactId="EBI-113217">
        <id>Q9V3Z1</id>
    </interactant>
    <interactant intactId="EBI-174844">
        <id>Q9VXS3</id>
        <label>Dmel\CG12708</label>
    </interactant>
    <organismsDiffer>false</organismsDiffer>
    <experiments>4</experiments>
</comment>
<comment type="subcellular location">
    <subcellularLocation>
        <location evidence="10 11 13">Nucleus</location>
    </subcellularLocation>
    <subcellularLocation>
        <location evidence="10 11 13">Cytoplasm</location>
    </subcellularLocation>
    <subcellularLocation>
        <location evidence="13">Cytoplasm</location>
        <location evidence="13">Cell cortex</location>
    </subcellularLocation>
    <text evidence="10 13">Weakly cytoplasmic (PubMed:29025897). In the main body follicle cells, strong nuclear accumulation at stage 10 that decreases to low levels in the cytoplasm by stage 12 (PubMed:23305818). In border cells, high levels of expression detected prior to border cell (BC) delamination (from stages 7 to 8) (PubMed:23305818). At stage 9, expression levels remains high in BC as their migration begins but decreases throughout migration. By stage 10 levels are low in BC nuclei when they arrive at the nurse cell/oocyte boundary (PubMed:23305818).</text>
</comment>
<comment type="tissue specificity">
    <text evidence="12">Expressed throughout the brain with highest levels of expression detected in the cell body rind and lower levels of expression detected in the neurophil (at protein level).</text>
</comment>
<comment type="developmental stage">
    <text evidence="3 4 5">Zygotic expression first occurs in the prospective embryonic mesoderm, and later in the ectoderm as well (PubMed:10837248). Expression decreases over embryogenesis (PubMed:10837248). High levels of expression in embryos at the beginning of cycle 14 (PubMed:10850494). During cellularization, expression declines but persists throughout gastrulation and until late embryogenesis (PubMed:10850494). In stage 5 embryos, ubiquitously expressed with increased expression in the ventral region (PubMed:10850493). During gastrulation, highest levels of expression are in the ventral cells (PubMed:10850494).</text>
</comment>
<comment type="domain">
    <text evidence="1">The protein kinase domain is predicted to be catalytically inactive.</text>
</comment>
<comment type="disruption phenotype">
    <text evidence="3 4 6 10 11 13">Low viability with only 14% of mutants survive to adulthood (PubMed:10850493). The egg chambers of surviving females often have only eight germline cysts half of which have an oocyte and the other half do not (PubMed:10850493). Early stage 9 to stage 10 embryos, display increased levels of slbo (PubMed:10949024). RNAi-mediated knockdown in embryos produces premature mitosis in part or all of the ventral region, resulting in many mutants displaying defects in gastrulation including partial invagination of the mesoderm (PubMed:10837248). RNAi-mediated knockdown results in an increase in phosphorylated Akt1 but has no effect on total Akt1 levels (PubMed:25329475, PubMed:29025897). RNAi-mediated knockdown in the fat body increases lipid accumulation, larval weight, fat body cell size and the size of fat body nuclei (PubMed:25329475). The increase in larval weight results in delayed pupariation (PubMed:25329475). Flies also display an increase in triglyceride levels which is consistent with the increase in the number and size of lipid bodies (PubMed:25329475). RNAi-mediated knockdown in the fat body does not result in a significant change in triglyceride levels but flies display an increase in glycogen levels and an increase in lipid droplet size (PubMed:29025897). No effect on glucose or trehalose levels in the hemolymph (PubMed:25329475, PubMed:29025897). RNAi-mediated knockdown in late stage border cells, partially reduced border cell migration (PubMed:23305818).</text>
</comment>
<comment type="miscellaneous">
    <text evidence="14">'tribbles' is named after fictional small round organisms from the Star Trek universe that proliferate uncontrollably.</text>
</comment>
<comment type="similarity">
    <text evidence="15">Belongs to the protein kinase superfamily. CAMK Ser/Thr protein kinase family. Tribbles subfamily.</text>
</comment>
<gene>
    <name evidence="14 18" type="primary">trbl</name>
    <name evidence="18" type="ORF">CG5408</name>
</gene>
<dbReference type="EMBL" id="AF204688">
    <property type="protein sequence ID" value="AAF26374.1"/>
    <property type="molecule type" value="mRNA"/>
</dbReference>
<dbReference type="EMBL" id="AE014296">
    <property type="protein sequence ID" value="AAF51590.1"/>
    <property type="molecule type" value="Genomic_DNA"/>
</dbReference>
<dbReference type="EMBL" id="BT004834">
    <property type="protein sequence ID" value="AAO45190.1"/>
    <property type="molecule type" value="mRNA"/>
</dbReference>
<dbReference type="RefSeq" id="NP_524672.1">
    <property type="nucleotide sequence ID" value="NM_079933.4"/>
</dbReference>
<dbReference type="SMR" id="Q9V3Z1"/>
<dbReference type="FunCoup" id="Q9V3Z1">
    <property type="interactions" value="389"/>
</dbReference>
<dbReference type="IntAct" id="Q9V3Z1">
    <property type="interactions" value="4"/>
</dbReference>
<dbReference type="STRING" id="7227.FBpp0077893"/>
<dbReference type="PaxDb" id="7227-FBpp0077893"/>
<dbReference type="DNASU" id="43999"/>
<dbReference type="EnsemblMetazoa" id="FBtr0078235">
    <property type="protein sequence ID" value="FBpp0077893"/>
    <property type="gene ID" value="FBgn0028978"/>
</dbReference>
<dbReference type="GeneID" id="43999"/>
<dbReference type="KEGG" id="dme:Dmel_CG5408"/>
<dbReference type="UCSC" id="CG5408-RA">
    <property type="organism name" value="d. melanogaster"/>
</dbReference>
<dbReference type="AGR" id="FB:FBgn0028978"/>
<dbReference type="CTD" id="43999"/>
<dbReference type="FlyBase" id="FBgn0028978">
    <property type="gene designation" value="trbl"/>
</dbReference>
<dbReference type="VEuPathDB" id="VectorBase:FBgn0028978"/>
<dbReference type="eggNOG" id="KOG0583">
    <property type="taxonomic scope" value="Eukaryota"/>
</dbReference>
<dbReference type="GeneTree" id="ENSGT00950000182986"/>
<dbReference type="HOGENOM" id="CLU_590897_0_0_1"/>
<dbReference type="InParanoid" id="Q9V3Z1"/>
<dbReference type="OMA" id="SDKIGCP"/>
<dbReference type="OrthoDB" id="410920at2759"/>
<dbReference type="PhylomeDB" id="Q9V3Z1"/>
<dbReference type="Reactome" id="R-DME-1257604">
    <property type="pathway name" value="PIP3 activates AKT signaling"/>
</dbReference>
<dbReference type="Reactome" id="R-DME-165158">
    <property type="pathway name" value="Activation of AKT2"/>
</dbReference>
<dbReference type="Reactome" id="R-DME-199418">
    <property type="pathway name" value="Negative regulation of the PI3K/AKT network"/>
</dbReference>
<dbReference type="Reactome" id="R-DME-389357">
    <property type="pathway name" value="CD28 dependent PI3K/Akt signaling"/>
</dbReference>
<dbReference type="Reactome" id="R-DME-5218920">
    <property type="pathway name" value="VEGFR2 mediated vascular permeability"/>
</dbReference>
<dbReference type="BioGRID-ORCS" id="43999">
    <property type="hits" value="1 hit in 3 CRISPR screens"/>
</dbReference>
<dbReference type="GenomeRNAi" id="43999"/>
<dbReference type="PRO" id="PR:Q9V3Z1"/>
<dbReference type="Proteomes" id="UP000000803">
    <property type="component" value="Chromosome 3L"/>
</dbReference>
<dbReference type="Bgee" id="FBgn0028978">
    <property type="expression patterns" value="Expressed in adult tracheocyte (Drosophila) in open tracheal system trachea and 163 other cell types or tissues"/>
</dbReference>
<dbReference type="GO" id="GO:0005938">
    <property type="term" value="C:cell cortex"/>
    <property type="evidence" value="ECO:0007669"/>
    <property type="project" value="UniProtKB-SubCell"/>
</dbReference>
<dbReference type="GO" id="GO:0005829">
    <property type="term" value="C:cytosol"/>
    <property type="evidence" value="ECO:0000314"/>
    <property type="project" value="FlyBase"/>
</dbReference>
<dbReference type="GO" id="GO:0005634">
    <property type="term" value="C:nucleus"/>
    <property type="evidence" value="ECO:0000314"/>
    <property type="project" value="FlyBase"/>
</dbReference>
<dbReference type="GO" id="GO:0005524">
    <property type="term" value="F:ATP binding"/>
    <property type="evidence" value="ECO:0007669"/>
    <property type="project" value="InterPro"/>
</dbReference>
<dbReference type="GO" id="GO:0031434">
    <property type="term" value="F:mitogen-activated protein kinase kinase binding"/>
    <property type="evidence" value="ECO:0000318"/>
    <property type="project" value="GO_Central"/>
</dbReference>
<dbReference type="GO" id="GO:0004860">
    <property type="term" value="F:protein kinase inhibitor activity"/>
    <property type="evidence" value="ECO:0000315"/>
    <property type="project" value="FlyBase"/>
</dbReference>
<dbReference type="GO" id="GO:0042593">
    <property type="term" value="P:glucose homeostasis"/>
    <property type="evidence" value="ECO:0000315"/>
    <property type="project" value="FlyBase"/>
</dbReference>
<dbReference type="GO" id="GO:0048640">
    <property type="term" value="P:negative regulation of developmental growth"/>
    <property type="evidence" value="ECO:0000315"/>
    <property type="project" value="FlyBase"/>
</dbReference>
<dbReference type="GO" id="GO:0046627">
    <property type="term" value="P:negative regulation of insulin receptor signaling pathway"/>
    <property type="evidence" value="ECO:0000316"/>
    <property type="project" value="FlyBase"/>
</dbReference>
<dbReference type="GO" id="GO:0010888">
    <property type="term" value="P:negative regulation of lipid storage"/>
    <property type="evidence" value="ECO:0000315"/>
    <property type="project" value="FlyBase"/>
</dbReference>
<dbReference type="GO" id="GO:0045839">
    <property type="term" value="P:negative regulation of mitotic nuclear division"/>
    <property type="evidence" value="ECO:0000315"/>
    <property type="project" value="FlyBase"/>
</dbReference>
<dbReference type="GO" id="GO:0051898">
    <property type="term" value="P:negative regulation of phosphatidylinositol 3-kinase/protein kinase B signal transduction"/>
    <property type="evidence" value="ECO:0000315"/>
    <property type="project" value="FlyBase"/>
</dbReference>
<dbReference type="GO" id="GO:0045793">
    <property type="term" value="P:positive regulation of cell size"/>
    <property type="evidence" value="ECO:0000315"/>
    <property type="project" value="FlyBase"/>
</dbReference>
<dbReference type="GO" id="GO:0032436">
    <property type="term" value="P:positive regulation of proteasomal ubiquitin-dependent protein catabolic process"/>
    <property type="evidence" value="ECO:0000318"/>
    <property type="project" value="GO_Central"/>
</dbReference>
<dbReference type="GO" id="GO:2000060">
    <property type="term" value="P:positive regulation of ubiquitin-dependent protein catabolic process"/>
    <property type="evidence" value="ECO:0000314"/>
    <property type="project" value="FlyBase"/>
</dbReference>
<dbReference type="GO" id="GO:0051726">
    <property type="term" value="P:regulation of cell cycle"/>
    <property type="evidence" value="ECO:0000315"/>
    <property type="project" value="FlyBase"/>
</dbReference>
<dbReference type="GO" id="GO:0007370">
    <property type="term" value="P:ventral furrow formation"/>
    <property type="evidence" value="ECO:0000316"/>
    <property type="project" value="FlyBase"/>
</dbReference>
<dbReference type="FunFam" id="1.10.510.10:FF:000153">
    <property type="entry name" value="Tribbles homolog 2"/>
    <property type="match status" value="1"/>
</dbReference>
<dbReference type="Gene3D" id="1.10.510.10">
    <property type="entry name" value="Transferase(Phosphotransferase) domain 1"/>
    <property type="match status" value="1"/>
</dbReference>
<dbReference type="InterPro" id="IPR011009">
    <property type="entry name" value="Kinase-like_dom_sf"/>
</dbReference>
<dbReference type="InterPro" id="IPR000719">
    <property type="entry name" value="Prot_kinase_dom"/>
</dbReference>
<dbReference type="InterPro" id="IPR024104">
    <property type="entry name" value="Tribbles/Ser_Thr_kinase_40"/>
</dbReference>
<dbReference type="PANTHER" id="PTHR22961">
    <property type="entry name" value="SER/THR PROTEIN KINASE-TRB"/>
    <property type="match status" value="1"/>
</dbReference>
<dbReference type="PANTHER" id="PTHR22961:SF13">
    <property type="entry name" value="TRIBBLES"/>
    <property type="match status" value="1"/>
</dbReference>
<dbReference type="Pfam" id="PF00069">
    <property type="entry name" value="Pkinase"/>
    <property type="match status" value="1"/>
</dbReference>
<dbReference type="SMART" id="SM00220">
    <property type="entry name" value="S_TKc"/>
    <property type="match status" value="1"/>
</dbReference>
<dbReference type="SUPFAM" id="SSF56112">
    <property type="entry name" value="Protein kinase-like (PK-like)"/>
    <property type="match status" value="1"/>
</dbReference>
<dbReference type="PROSITE" id="PS50011">
    <property type="entry name" value="PROTEIN_KINASE_DOM"/>
    <property type="match status" value="1"/>
</dbReference>
<accession>Q9V3Z1</accession>
<evidence type="ECO:0000255" key="1">
    <source>
        <dbReference type="PROSITE-ProRule" id="PRU00159"/>
    </source>
</evidence>
<evidence type="ECO:0000256" key="2">
    <source>
        <dbReference type="SAM" id="MobiDB-lite"/>
    </source>
</evidence>
<evidence type="ECO:0000269" key="3">
    <source>
    </source>
</evidence>
<evidence type="ECO:0000269" key="4">
    <source>
    </source>
</evidence>
<evidence type="ECO:0000269" key="5">
    <source>
    </source>
</evidence>
<evidence type="ECO:0000269" key="6">
    <source>
    </source>
</evidence>
<evidence type="ECO:0000269" key="7">
    <source>
    </source>
</evidence>
<evidence type="ECO:0000269" key="8">
    <source>
    </source>
</evidence>
<evidence type="ECO:0000269" key="9">
    <source>
    </source>
</evidence>
<evidence type="ECO:0000269" key="10">
    <source>
    </source>
</evidence>
<evidence type="ECO:0000269" key="11">
    <source>
    </source>
</evidence>
<evidence type="ECO:0000269" key="12">
    <source>
    </source>
</evidence>
<evidence type="ECO:0000269" key="13">
    <source>
    </source>
</evidence>
<evidence type="ECO:0000303" key="14">
    <source>
    </source>
</evidence>
<evidence type="ECO:0000305" key="15"/>
<evidence type="ECO:0000312" key="16">
    <source>
        <dbReference type="EMBL" id="AAF26374.1"/>
    </source>
</evidence>
<evidence type="ECO:0000312" key="17">
    <source>
        <dbReference type="EMBL" id="AAO45190.1"/>
    </source>
</evidence>
<evidence type="ECO:0000312" key="18">
    <source>
        <dbReference type="FlyBase" id="FBgn0028978"/>
    </source>
</evidence>
<evidence type="ECO:0000312" key="19">
    <source>
        <dbReference type="Proteomes" id="UP000000803"/>
    </source>
</evidence>
<name>TRIB_DROME</name>